<accession>A1CZ18</accession>
<comment type="function">
    <text evidence="1">Regulatory subunit of the slx1-slx4 structure-specific endonuclease that resolves DNA secondary structures generated during DNA repair and recombination. Has endonuclease activity towards branched DNA substrates, introducing single-strand cuts in duplex DNA close to junctions with ss-DNA.</text>
</comment>
<comment type="subunit">
    <text evidence="1">Forms a heterodimer with slx1.</text>
</comment>
<comment type="subcellular location">
    <subcellularLocation>
        <location evidence="1">Nucleus</location>
    </subcellularLocation>
</comment>
<comment type="PTM">
    <text evidence="1">Phosphorylated in response to DNA damage.</text>
</comment>
<comment type="similarity">
    <text evidence="1">Belongs to the SLX4 family.</text>
</comment>
<organism>
    <name type="scientific">Neosartorya fischeri (strain ATCC 1020 / DSM 3700 / CBS 544.65 / FGSC A1164 / JCM 1740 / NRRL 181 / WB 181)</name>
    <name type="common">Aspergillus fischerianus</name>
    <dbReference type="NCBI Taxonomy" id="331117"/>
    <lineage>
        <taxon>Eukaryota</taxon>
        <taxon>Fungi</taxon>
        <taxon>Dikarya</taxon>
        <taxon>Ascomycota</taxon>
        <taxon>Pezizomycotina</taxon>
        <taxon>Eurotiomycetes</taxon>
        <taxon>Eurotiomycetidae</taxon>
        <taxon>Eurotiales</taxon>
        <taxon>Aspergillaceae</taxon>
        <taxon>Aspergillus</taxon>
        <taxon>Aspergillus subgen. Fumigati</taxon>
    </lineage>
</organism>
<name>SLX4_NEOFI</name>
<keyword id="KW-0227">DNA damage</keyword>
<keyword id="KW-0233">DNA recombination</keyword>
<keyword id="KW-0234">DNA repair</keyword>
<keyword id="KW-0539">Nucleus</keyword>
<keyword id="KW-0597">Phosphoprotein</keyword>
<keyword id="KW-1185">Reference proteome</keyword>
<sequence>MYTATDVVVLSSSPDQIPSLTLAKPKCDAEKAFVLSPVSSSPSALPSASELFQPPTRSRFFKTGDGNEGSSRTAREESETGTKQNDLAASRRKRAARGGRQKRTKEQPTNESQTLFDHPEPPIPKHVGCTSKKGTGSKKKRTDAANKCTKSENKTITGKVTKPGITETTKSEDKTKELVTADVSTGKSPANKLELEKDGLQLEVAMKRRLDWTPTKDTGKQAVALDDTGDNKTRFGELLSEYGFLKAATDSQGDSKLSDGAPTKRRRLELVDTRTPSTSKRTSPDADSDRSNVRSTRSSKAPAAEGKPKKRSRKITTLTGRVTALYTNDCTDHLDAANTMISPSDDVSSKLFSKSLDIDSCVLPPEDAVDYLKDQDLIFGTCSQLEREDSPTMLRDMQKAIRASENSMIENRKPSSTTRAGSGLYSHTAVSRFQTPRDLWSVAARDMDGSLAEIEVLDMVDITDISELPPKPNGELPDRSEKNDKDTVSQGESFRPVEITDEVEVEVDVRTENLATSETNPGETACGASELRPRPRFADWKDSDLLKQVRLYGFKPMKSRRKMIEVLERCWKAQHVSTRTGVQDVPGKPDDGSAGKAGTIKSQTNKQASKMDAAEKTRKASACLKEEAKSSTALEDKPSHAADGSSQVLTKSSFADVEEIEDSEDEVIPSPSRLQSRYKRHISESRSSQPLSVSATPSTPSSPTRTNADSGTKPSPFGLAAESRLPDLASQITKAVRLQPRSFSVDCKRPSWHEKILMYDPIILEDFATWLNIEGLGLVHEDREVSAEFVRQWCESNGICCGFRKNSRQSER</sequence>
<proteinExistence type="inferred from homology"/>
<feature type="chain" id="PRO_0000388033" description="Structure-specific endonuclease subunit slx4">
    <location>
        <begin position="1"/>
        <end position="812"/>
    </location>
</feature>
<feature type="region of interest" description="Disordered" evidence="2">
    <location>
        <begin position="36"/>
        <end position="194"/>
    </location>
</feature>
<feature type="region of interest" description="Disordered" evidence="2">
    <location>
        <begin position="212"/>
        <end position="231"/>
    </location>
</feature>
<feature type="region of interest" description="Disordered" evidence="2">
    <location>
        <begin position="249"/>
        <end position="312"/>
    </location>
</feature>
<feature type="region of interest" description="Disordered" evidence="2">
    <location>
        <begin position="465"/>
        <end position="494"/>
    </location>
</feature>
<feature type="region of interest" description="Disordered" evidence="2">
    <location>
        <begin position="575"/>
        <end position="719"/>
    </location>
</feature>
<feature type="compositionally biased region" description="Low complexity" evidence="2">
    <location>
        <begin position="36"/>
        <end position="49"/>
    </location>
</feature>
<feature type="compositionally biased region" description="Basic residues" evidence="2">
    <location>
        <begin position="90"/>
        <end position="103"/>
    </location>
</feature>
<feature type="compositionally biased region" description="Basic and acidic residues" evidence="2">
    <location>
        <begin position="169"/>
        <end position="179"/>
    </location>
</feature>
<feature type="compositionally biased region" description="Basic and acidic residues" evidence="2">
    <location>
        <begin position="282"/>
        <end position="292"/>
    </location>
</feature>
<feature type="compositionally biased region" description="Basic and acidic residues" evidence="2">
    <location>
        <begin position="476"/>
        <end position="487"/>
    </location>
</feature>
<feature type="compositionally biased region" description="Basic and acidic residues" evidence="2">
    <location>
        <begin position="612"/>
        <end position="640"/>
    </location>
</feature>
<feature type="compositionally biased region" description="Polar residues" evidence="2">
    <location>
        <begin position="644"/>
        <end position="653"/>
    </location>
</feature>
<feature type="compositionally biased region" description="Acidic residues" evidence="2">
    <location>
        <begin position="656"/>
        <end position="667"/>
    </location>
</feature>
<feature type="compositionally biased region" description="Low complexity" evidence="2">
    <location>
        <begin position="690"/>
        <end position="706"/>
    </location>
</feature>
<protein>
    <recommendedName>
        <fullName evidence="1">Structure-specific endonuclease subunit slx4</fullName>
    </recommendedName>
</protein>
<evidence type="ECO:0000255" key="1">
    <source>
        <dbReference type="HAMAP-Rule" id="MF_03110"/>
    </source>
</evidence>
<evidence type="ECO:0000256" key="2">
    <source>
        <dbReference type="SAM" id="MobiDB-lite"/>
    </source>
</evidence>
<reference key="1">
    <citation type="journal article" date="2008" name="PLoS Genet.">
        <title>Genomic islands in the pathogenic filamentous fungus Aspergillus fumigatus.</title>
        <authorList>
            <person name="Fedorova N.D."/>
            <person name="Khaldi N."/>
            <person name="Joardar V.S."/>
            <person name="Maiti R."/>
            <person name="Amedeo P."/>
            <person name="Anderson M.J."/>
            <person name="Crabtree J."/>
            <person name="Silva J.C."/>
            <person name="Badger J.H."/>
            <person name="Albarraq A."/>
            <person name="Angiuoli S."/>
            <person name="Bussey H."/>
            <person name="Bowyer P."/>
            <person name="Cotty P.J."/>
            <person name="Dyer P.S."/>
            <person name="Egan A."/>
            <person name="Galens K."/>
            <person name="Fraser-Liggett C.M."/>
            <person name="Haas B.J."/>
            <person name="Inman J.M."/>
            <person name="Kent R."/>
            <person name="Lemieux S."/>
            <person name="Malavazi I."/>
            <person name="Orvis J."/>
            <person name="Roemer T."/>
            <person name="Ronning C.M."/>
            <person name="Sundaram J.P."/>
            <person name="Sutton G."/>
            <person name="Turner G."/>
            <person name="Venter J.C."/>
            <person name="White O.R."/>
            <person name="Whitty B.R."/>
            <person name="Youngman P."/>
            <person name="Wolfe K.H."/>
            <person name="Goldman G.H."/>
            <person name="Wortman J.R."/>
            <person name="Jiang B."/>
            <person name="Denning D.W."/>
            <person name="Nierman W.C."/>
        </authorList>
    </citation>
    <scope>NUCLEOTIDE SEQUENCE [LARGE SCALE GENOMIC DNA]</scope>
    <source>
        <strain>ATCC 1020 / DSM 3700 / CBS 544.65 / FGSC A1164 / JCM 1740 / NRRL 181 / WB 181</strain>
    </source>
</reference>
<dbReference type="EMBL" id="DS027686">
    <property type="protein sequence ID" value="EAW23988.1"/>
    <property type="molecule type" value="Genomic_DNA"/>
</dbReference>
<dbReference type="RefSeq" id="XP_001265885.1">
    <property type="nucleotide sequence ID" value="XM_001265884.1"/>
</dbReference>
<dbReference type="SMR" id="A1CZ18"/>
<dbReference type="STRING" id="331117.A1CZ18"/>
<dbReference type="EnsemblFungi" id="EAW23988">
    <property type="protein sequence ID" value="EAW23988"/>
    <property type="gene ID" value="NFIA_035560"/>
</dbReference>
<dbReference type="GeneID" id="4592818"/>
<dbReference type="KEGG" id="nfi:NFIA_035560"/>
<dbReference type="VEuPathDB" id="FungiDB:NFIA_035560"/>
<dbReference type="eggNOG" id="ENOG502S832">
    <property type="taxonomic scope" value="Eukaryota"/>
</dbReference>
<dbReference type="HOGENOM" id="CLU_016773_0_0_1"/>
<dbReference type="OMA" id="SICCLWK"/>
<dbReference type="OrthoDB" id="5349119at2759"/>
<dbReference type="Proteomes" id="UP000006702">
    <property type="component" value="Unassembled WGS sequence"/>
</dbReference>
<dbReference type="GO" id="GO:0033557">
    <property type="term" value="C:Slx1-Slx4 complex"/>
    <property type="evidence" value="ECO:0007669"/>
    <property type="project" value="UniProtKB-UniRule"/>
</dbReference>
<dbReference type="GO" id="GO:0017108">
    <property type="term" value="F:5'-flap endonuclease activity"/>
    <property type="evidence" value="ECO:0007669"/>
    <property type="project" value="InterPro"/>
</dbReference>
<dbReference type="GO" id="GO:0006310">
    <property type="term" value="P:DNA recombination"/>
    <property type="evidence" value="ECO:0007669"/>
    <property type="project" value="UniProtKB-UniRule"/>
</dbReference>
<dbReference type="GO" id="GO:0006281">
    <property type="term" value="P:DNA repair"/>
    <property type="evidence" value="ECO:0007669"/>
    <property type="project" value="UniProtKB-UniRule"/>
</dbReference>
<dbReference type="GO" id="GO:0006260">
    <property type="term" value="P:DNA replication"/>
    <property type="evidence" value="ECO:0007669"/>
    <property type="project" value="InterPro"/>
</dbReference>
<dbReference type="CDD" id="cd22999">
    <property type="entry name" value="SAP_SLX4"/>
    <property type="match status" value="1"/>
</dbReference>
<dbReference type="HAMAP" id="MF_03110">
    <property type="entry name" value="Endonuc_su_Slx4"/>
    <property type="match status" value="1"/>
</dbReference>
<dbReference type="InterPro" id="IPR027784">
    <property type="entry name" value="Slx4_ascomycetes"/>
</dbReference>
<dbReference type="InterPro" id="IPR018574">
    <property type="entry name" value="Structure-sp_endonuc_su_Slx4"/>
</dbReference>
<dbReference type="Pfam" id="PF09494">
    <property type="entry name" value="Slx4"/>
    <property type="match status" value="1"/>
</dbReference>
<gene>
    <name type="primary">slx4</name>
    <name type="ORF">NFIA_035560</name>
</gene>